<reference key="1">
    <citation type="journal article" date="2002" name="Proc. Natl. Acad. Sci. U.S.A.">
        <title>The Brucella suis genome reveals fundamental similarities between animal and plant pathogens and symbionts.</title>
        <authorList>
            <person name="Paulsen I.T."/>
            <person name="Seshadri R."/>
            <person name="Nelson K.E."/>
            <person name="Eisen J.A."/>
            <person name="Heidelberg J.F."/>
            <person name="Read T.D."/>
            <person name="Dodson R.J."/>
            <person name="Umayam L.A."/>
            <person name="Brinkac L.M."/>
            <person name="Beanan M.J."/>
            <person name="Daugherty S.C."/>
            <person name="DeBoy R.T."/>
            <person name="Durkin A.S."/>
            <person name="Kolonay J.F."/>
            <person name="Madupu R."/>
            <person name="Nelson W.C."/>
            <person name="Ayodeji B."/>
            <person name="Kraul M."/>
            <person name="Shetty J."/>
            <person name="Malek J.A."/>
            <person name="Van Aken S.E."/>
            <person name="Riedmuller S."/>
            <person name="Tettelin H."/>
            <person name="Gill S.R."/>
            <person name="White O."/>
            <person name="Salzberg S.L."/>
            <person name="Hoover D.L."/>
            <person name="Lindler L.E."/>
            <person name="Halling S.M."/>
            <person name="Boyle S.M."/>
            <person name="Fraser C.M."/>
        </authorList>
    </citation>
    <scope>NUCLEOTIDE SEQUENCE [LARGE SCALE GENOMIC DNA]</scope>
    <source>
        <strain>1330</strain>
    </source>
</reference>
<reference key="2">
    <citation type="journal article" date="2011" name="J. Bacteriol.">
        <title>Revised genome sequence of Brucella suis 1330.</title>
        <authorList>
            <person name="Tae H."/>
            <person name="Shallom S."/>
            <person name="Settlage R."/>
            <person name="Preston D."/>
            <person name="Adams L.G."/>
            <person name="Garner H.R."/>
        </authorList>
    </citation>
    <scope>NUCLEOTIDE SEQUENCE [LARGE SCALE GENOMIC DNA]</scope>
    <source>
        <strain>1330</strain>
    </source>
</reference>
<protein>
    <recommendedName>
        <fullName evidence="1">Probable transcriptional regulatory protein BR1717/BS1330_I1711</fullName>
    </recommendedName>
</protein>
<keyword id="KW-0963">Cytoplasm</keyword>
<keyword id="KW-0238">DNA-binding</keyword>
<keyword id="KW-0804">Transcription</keyword>
<keyword id="KW-0805">Transcription regulation</keyword>
<evidence type="ECO:0000255" key="1">
    <source>
        <dbReference type="HAMAP-Rule" id="MF_00693"/>
    </source>
</evidence>
<gene>
    <name type="ordered locus">BR1717</name>
    <name type="ordered locus">BS1330_I1711</name>
</gene>
<organism>
    <name type="scientific">Brucella suis biovar 1 (strain 1330)</name>
    <dbReference type="NCBI Taxonomy" id="204722"/>
    <lineage>
        <taxon>Bacteria</taxon>
        <taxon>Pseudomonadati</taxon>
        <taxon>Pseudomonadota</taxon>
        <taxon>Alphaproteobacteria</taxon>
        <taxon>Hyphomicrobiales</taxon>
        <taxon>Brucellaceae</taxon>
        <taxon>Brucella/Ochrobactrum group</taxon>
        <taxon>Brucella</taxon>
    </lineage>
</organism>
<name>Y1717_BRUSU</name>
<feature type="chain" id="PRO_0000175776" description="Probable transcriptional regulatory protein BR1717/BS1330_I1711">
    <location>
        <begin position="1"/>
        <end position="248"/>
    </location>
</feature>
<proteinExistence type="inferred from homology"/>
<dbReference type="EMBL" id="AE014291">
    <property type="protein sequence ID" value="AAN30617.1"/>
    <property type="molecule type" value="Genomic_DNA"/>
</dbReference>
<dbReference type="EMBL" id="CP002997">
    <property type="protein sequence ID" value="AEM19034.1"/>
    <property type="molecule type" value="Genomic_DNA"/>
</dbReference>
<dbReference type="RefSeq" id="WP_002964805.1">
    <property type="nucleotide sequence ID" value="NZ_KN046804.1"/>
</dbReference>
<dbReference type="SMR" id="P67174"/>
<dbReference type="KEGG" id="bms:BR1717"/>
<dbReference type="KEGG" id="bsi:BS1330_I1711"/>
<dbReference type="PATRIC" id="fig|204722.22.peg.138"/>
<dbReference type="HOGENOM" id="CLU_062974_2_2_5"/>
<dbReference type="Proteomes" id="UP000007104">
    <property type="component" value="Chromosome I"/>
</dbReference>
<dbReference type="GO" id="GO:0005829">
    <property type="term" value="C:cytosol"/>
    <property type="evidence" value="ECO:0007669"/>
    <property type="project" value="TreeGrafter"/>
</dbReference>
<dbReference type="GO" id="GO:0003677">
    <property type="term" value="F:DNA binding"/>
    <property type="evidence" value="ECO:0007669"/>
    <property type="project" value="UniProtKB-UniRule"/>
</dbReference>
<dbReference type="GO" id="GO:0006355">
    <property type="term" value="P:regulation of DNA-templated transcription"/>
    <property type="evidence" value="ECO:0007669"/>
    <property type="project" value="UniProtKB-UniRule"/>
</dbReference>
<dbReference type="FunFam" id="1.10.10.200:FF:000002">
    <property type="entry name" value="Probable transcriptional regulatory protein CLM62_37755"/>
    <property type="match status" value="1"/>
</dbReference>
<dbReference type="Gene3D" id="1.10.10.200">
    <property type="match status" value="1"/>
</dbReference>
<dbReference type="Gene3D" id="3.30.70.980">
    <property type="match status" value="2"/>
</dbReference>
<dbReference type="HAMAP" id="MF_00693">
    <property type="entry name" value="Transcrip_reg_TACO1"/>
    <property type="match status" value="1"/>
</dbReference>
<dbReference type="InterPro" id="IPR017856">
    <property type="entry name" value="Integrase-like_N"/>
</dbReference>
<dbReference type="InterPro" id="IPR048300">
    <property type="entry name" value="TACO1_YebC-like_2nd/3rd_dom"/>
</dbReference>
<dbReference type="InterPro" id="IPR049083">
    <property type="entry name" value="TACO1_YebC_N"/>
</dbReference>
<dbReference type="InterPro" id="IPR002876">
    <property type="entry name" value="Transcrip_reg_TACO1-like"/>
</dbReference>
<dbReference type="InterPro" id="IPR026564">
    <property type="entry name" value="Transcrip_reg_TACO1-like_dom3"/>
</dbReference>
<dbReference type="InterPro" id="IPR029072">
    <property type="entry name" value="YebC-like"/>
</dbReference>
<dbReference type="NCBIfam" id="NF001030">
    <property type="entry name" value="PRK00110.1"/>
    <property type="match status" value="1"/>
</dbReference>
<dbReference type="NCBIfam" id="NF009044">
    <property type="entry name" value="PRK12378.1"/>
    <property type="match status" value="1"/>
</dbReference>
<dbReference type="NCBIfam" id="TIGR01033">
    <property type="entry name" value="YebC/PmpR family DNA-binding transcriptional regulator"/>
    <property type="match status" value="1"/>
</dbReference>
<dbReference type="PANTHER" id="PTHR12532:SF6">
    <property type="entry name" value="TRANSCRIPTIONAL REGULATORY PROTEIN YEBC-RELATED"/>
    <property type="match status" value="1"/>
</dbReference>
<dbReference type="PANTHER" id="PTHR12532">
    <property type="entry name" value="TRANSLATIONAL ACTIVATOR OF CYTOCHROME C OXIDASE 1"/>
    <property type="match status" value="1"/>
</dbReference>
<dbReference type="Pfam" id="PF20772">
    <property type="entry name" value="TACO1_YebC_N"/>
    <property type="match status" value="1"/>
</dbReference>
<dbReference type="Pfam" id="PF01709">
    <property type="entry name" value="Transcrip_reg"/>
    <property type="match status" value="1"/>
</dbReference>
<dbReference type="SUPFAM" id="SSF75625">
    <property type="entry name" value="YebC-like"/>
    <property type="match status" value="1"/>
</dbReference>
<sequence>MAGHSQFKNIMHRKGRQDAVRSKMFSKLAREITVAAKQGLPDPAMNPRLRLAIQNAKAQSMPKDNIERAIKKAAGNDGENYDEVRYEGRGPGGVSVIVEALTDNRNRTASNVRAAFTKSGGSLGETGSVSFMFDRVGEIVYKPEAGDADKVMEAAIEAGAEDVQSGEDGHVILCAFEDIGEVSKALEAALGEAESIKTIWKPQTNTELDEEKARSVLKLLSVLEDDDDVQNVYTNFEVSDEVMEKLSA</sequence>
<accession>P67174</accession>
<accession>G0K6X9</accession>
<accession>Q8FYY9</accession>
<accession>Q8YIW8</accession>
<comment type="subcellular location">
    <subcellularLocation>
        <location evidence="1">Cytoplasm</location>
    </subcellularLocation>
</comment>
<comment type="similarity">
    <text evidence="1">Belongs to the TACO1 family.</text>
</comment>